<reference key="1">
    <citation type="journal article" date="2004" name="Proc. Natl. Acad. Sci. U.S.A.">
        <title>Complete genomes of two clinical Staphylococcus aureus strains: evidence for the rapid evolution of virulence and drug resistance.</title>
        <authorList>
            <person name="Holden M.T.G."/>
            <person name="Feil E.J."/>
            <person name="Lindsay J.A."/>
            <person name="Peacock S.J."/>
            <person name="Day N.P.J."/>
            <person name="Enright M.C."/>
            <person name="Foster T.J."/>
            <person name="Moore C.E."/>
            <person name="Hurst L."/>
            <person name="Atkin R."/>
            <person name="Barron A."/>
            <person name="Bason N."/>
            <person name="Bentley S.D."/>
            <person name="Chillingworth C."/>
            <person name="Chillingworth T."/>
            <person name="Churcher C."/>
            <person name="Clark L."/>
            <person name="Corton C."/>
            <person name="Cronin A."/>
            <person name="Doggett J."/>
            <person name="Dowd L."/>
            <person name="Feltwell T."/>
            <person name="Hance Z."/>
            <person name="Harris B."/>
            <person name="Hauser H."/>
            <person name="Holroyd S."/>
            <person name="Jagels K."/>
            <person name="James K.D."/>
            <person name="Lennard N."/>
            <person name="Line A."/>
            <person name="Mayes R."/>
            <person name="Moule S."/>
            <person name="Mungall K."/>
            <person name="Ormond D."/>
            <person name="Quail M.A."/>
            <person name="Rabbinowitsch E."/>
            <person name="Rutherford K.M."/>
            <person name="Sanders M."/>
            <person name="Sharp S."/>
            <person name="Simmonds M."/>
            <person name="Stevens K."/>
            <person name="Whitehead S."/>
            <person name="Barrell B.G."/>
            <person name="Spratt B.G."/>
            <person name="Parkhill J."/>
        </authorList>
    </citation>
    <scope>NUCLEOTIDE SEQUENCE [LARGE SCALE GENOMIC DNA]</scope>
    <source>
        <strain>MSSA476</strain>
    </source>
</reference>
<accession>Q6GBK7</accession>
<feature type="chain" id="PRO_0000372289" description="Putative antiporter subunit mnhA2">
    <location>
        <begin position="1"/>
        <end position="800"/>
    </location>
</feature>
<feature type="transmembrane region" description="Helical" evidence="2">
    <location>
        <begin position="1"/>
        <end position="21"/>
    </location>
</feature>
<feature type="transmembrane region" description="Helical" evidence="2">
    <location>
        <begin position="33"/>
        <end position="53"/>
    </location>
</feature>
<feature type="transmembrane region" description="Helical" evidence="2">
    <location>
        <begin position="78"/>
        <end position="98"/>
    </location>
</feature>
<feature type="transmembrane region" description="Helical" evidence="2">
    <location>
        <begin position="118"/>
        <end position="138"/>
    </location>
</feature>
<feature type="transmembrane region" description="Helical" evidence="2">
    <location>
        <begin position="167"/>
        <end position="187"/>
    </location>
</feature>
<feature type="transmembrane region" description="Helical" evidence="2">
    <location>
        <begin position="207"/>
        <end position="227"/>
    </location>
</feature>
<feature type="transmembrane region" description="Helical" evidence="2">
    <location>
        <begin position="241"/>
        <end position="261"/>
    </location>
</feature>
<feature type="transmembrane region" description="Helical" evidence="2">
    <location>
        <begin position="273"/>
        <end position="293"/>
    </location>
</feature>
<feature type="transmembrane region" description="Helical" evidence="2">
    <location>
        <begin position="300"/>
        <end position="320"/>
    </location>
</feature>
<feature type="transmembrane region" description="Helical" evidence="2">
    <location>
        <begin position="331"/>
        <end position="351"/>
    </location>
</feature>
<feature type="transmembrane region" description="Helical" evidence="2">
    <location>
        <begin position="387"/>
        <end position="407"/>
    </location>
</feature>
<feature type="transmembrane region" description="Helical" evidence="2">
    <location>
        <begin position="424"/>
        <end position="444"/>
    </location>
</feature>
<feature type="transmembrane region" description="Helical" evidence="2">
    <location>
        <begin position="472"/>
        <end position="492"/>
    </location>
</feature>
<feature type="transmembrane region" description="Helical" evidence="2">
    <location>
        <begin position="527"/>
        <end position="547"/>
    </location>
</feature>
<feature type="transmembrane region" description="Helical" evidence="2">
    <location>
        <begin position="595"/>
        <end position="615"/>
    </location>
</feature>
<feature type="transmembrane region" description="Helical" evidence="2">
    <location>
        <begin position="627"/>
        <end position="647"/>
    </location>
</feature>
<feature type="transmembrane region" description="Helical" evidence="2">
    <location>
        <begin position="651"/>
        <end position="671"/>
    </location>
</feature>
<feature type="transmembrane region" description="Helical" evidence="2">
    <location>
        <begin position="676"/>
        <end position="696"/>
    </location>
</feature>
<feature type="transmembrane region" description="Helical" evidence="2">
    <location>
        <begin position="712"/>
        <end position="732"/>
    </location>
</feature>
<feature type="transmembrane region" description="Helical" evidence="2">
    <location>
        <begin position="768"/>
        <end position="788"/>
    </location>
</feature>
<name>MNHA2_STAAS</name>
<sequence>MSLVYLLIAILVIMAMILLMSKRRALAKYAGYIALVAPVISSIYFLIQIPSVAKLQYLSTSIPWIKTLDINLDLRLDGLSLMFSLIISLIGIAVFFYATQYLSSRKDNLPRFYFYLTLFMFSMIGIVLSDNTILMYIFWELTSVSSFLLISYWYNNGDSQFGAMQSFMITVFGGLALLVGFIMLYIMTGTNNITEILGQADHIKNHGLFIPMIFMFLLGAFTKSAQFPFHIWLPRAMAAPTPVSAYLHSATMVKAGIFLLLRFTPLLGLSNMYVYIVTFVGLITMLFGSITALKQWDLKGILAYSTISQLGMIMAMVGIGGGYAQHQQDAIASIYVFVLFGALFHLMNHAIFKCALFMGVGILDHEAGSRDIRILSGMRQLFPKMNLVMTIAALSMAGVPFLNGFLSKEMFLDALTQTGQLSQFSLISMIAIVFVGVIASVFTFTYALYMVKEVFWTKYDSKVFTKKNIHEPWLFSLPSLILMVLVPVIFFVPNIFGKGIIVLALRAVSGGNHQIDQLAPHVSQWHGFNIPLLLTIIIILLGSVLAIKVDWKKVFTGKIRQISVSKSYEMVYRHFEKFATKRFKRVMQDRLNQYIIMTLGIFMIIIGYGYIRIGLPKVHQLHVSEFGALEIILAIVTVTIGISLIFIRQRLTMVILNGVIGFVVTLFFIAMKAPDLALTQLVVETITTILFIVSFSRLPNVPRSNANKKREIIKISVSLLMALIVVSLIFITQQTDGLSSISDFYLKADKLTGGKNIVNAILGDFRALDTLFEGLVLIITGLGIYTLLNYQDRRGQDERE</sequence>
<comment type="subunit">
    <text evidence="1">May form a heterooligomeric complex that consists of seven subunits: mnhA2, mnhB2, mnhC2, mnhD2, mnhE2, mnhF2 and mnhG2.</text>
</comment>
<comment type="subcellular location">
    <subcellularLocation>
        <location evidence="3">Cell membrane</location>
        <topology evidence="3">Multi-pass membrane protein</topology>
    </subcellularLocation>
</comment>
<comment type="similarity">
    <text evidence="3">Belongs to the CPA3 antiporters (TC 2.A.63) subunit A family.</text>
</comment>
<dbReference type="EMBL" id="BX571857">
    <property type="protein sequence ID" value="CAG42364.1"/>
    <property type="molecule type" value="Genomic_DNA"/>
</dbReference>
<dbReference type="RefSeq" id="WP_000060780.1">
    <property type="nucleotide sequence ID" value="NC_002953.3"/>
</dbReference>
<dbReference type="SMR" id="Q6GBK7"/>
<dbReference type="KEGG" id="sas:SAS0589"/>
<dbReference type="HOGENOM" id="CLU_007100_2_1_9"/>
<dbReference type="GO" id="GO:0005886">
    <property type="term" value="C:plasma membrane"/>
    <property type="evidence" value="ECO:0007669"/>
    <property type="project" value="UniProtKB-SubCell"/>
</dbReference>
<dbReference type="GO" id="GO:0015297">
    <property type="term" value="F:antiporter activity"/>
    <property type="evidence" value="ECO:0007669"/>
    <property type="project" value="UniProtKB-KW"/>
</dbReference>
<dbReference type="GO" id="GO:0006811">
    <property type="term" value="P:monoatomic ion transport"/>
    <property type="evidence" value="ECO:0007669"/>
    <property type="project" value="UniProtKB-KW"/>
</dbReference>
<dbReference type="InterPro" id="IPR050616">
    <property type="entry name" value="CPA3_Na-H_Antiporter_A"/>
</dbReference>
<dbReference type="InterPro" id="IPR025383">
    <property type="entry name" value="MrpA_C/MbhD"/>
</dbReference>
<dbReference type="InterPro" id="IPR046806">
    <property type="entry name" value="MrpA_C/MbhE"/>
</dbReference>
<dbReference type="InterPro" id="IPR001750">
    <property type="entry name" value="ND/Mrp_TM"/>
</dbReference>
<dbReference type="InterPro" id="IPR001516">
    <property type="entry name" value="Proton_antipo_N"/>
</dbReference>
<dbReference type="NCBIfam" id="NF009286">
    <property type="entry name" value="PRK12646.1"/>
    <property type="match status" value="1"/>
</dbReference>
<dbReference type="PANTHER" id="PTHR43373">
    <property type="entry name" value="NA(+)/H(+) ANTIPORTER SUBUNIT"/>
    <property type="match status" value="1"/>
</dbReference>
<dbReference type="PANTHER" id="PTHR43373:SF1">
    <property type="entry name" value="NA(+)_H(+) ANTIPORTER SUBUNIT A"/>
    <property type="match status" value="1"/>
</dbReference>
<dbReference type="Pfam" id="PF13244">
    <property type="entry name" value="MbhD"/>
    <property type="match status" value="1"/>
</dbReference>
<dbReference type="Pfam" id="PF20501">
    <property type="entry name" value="MbhE"/>
    <property type="match status" value="1"/>
</dbReference>
<dbReference type="Pfam" id="PF00361">
    <property type="entry name" value="Proton_antipo_M"/>
    <property type="match status" value="1"/>
</dbReference>
<dbReference type="Pfam" id="PF00662">
    <property type="entry name" value="Proton_antipo_N"/>
    <property type="match status" value="1"/>
</dbReference>
<dbReference type="PRINTS" id="PR01434">
    <property type="entry name" value="NADHDHGNASE5"/>
</dbReference>
<evidence type="ECO:0000250" key="1"/>
<evidence type="ECO:0000255" key="2"/>
<evidence type="ECO:0000305" key="3"/>
<keyword id="KW-0050">Antiport</keyword>
<keyword id="KW-1003">Cell membrane</keyword>
<keyword id="KW-0406">Ion transport</keyword>
<keyword id="KW-0472">Membrane</keyword>
<keyword id="KW-0812">Transmembrane</keyword>
<keyword id="KW-1133">Transmembrane helix</keyword>
<keyword id="KW-0813">Transport</keyword>
<gene>
    <name type="primary">mnhA2</name>
    <name type="synonym">mrpA2</name>
    <name type="ordered locus">SAS0589</name>
</gene>
<proteinExistence type="inferred from homology"/>
<protein>
    <recommendedName>
        <fullName>Putative antiporter subunit mnhA2</fullName>
    </recommendedName>
    <alternativeName>
        <fullName>Mrp complex subunit A2</fullName>
    </alternativeName>
    <alternativeName>
        <fullName>Putative NADH-ubiquinone oxidoreductase subunit mnhA2</fullName>
    </alternativeName>
</protein>
<organism>
    <name type="scientific">Staphylococcus aureus (strain MSSA476)</name>
    <dbReference type="NCBI Taxonomy" id="282459"/>
    <lineage>
        <taxon>Bacteria</taxon>
        <taxon>Bacillati</taxon>
        <taxon>Bacillota</taxon>
        <taxon>Bacilli</taxon>
        <taxon>Bacillales</taxon>
        <taxon>Staphylococcaceae</taxon>
        <taxon>Staphylococcus</taxon>
    </lineage>
</organism>